<name>RAB6A_HUMAN</name>
<comment type="function">
    <text evidence="21 22 33">The small GTPases Rab are key regulators of intracellular membrane trafficking, from the formation of transport vesicles to their fusion with membranes (PubMed:25962623). Rabs cycle between an inactive GDP-bound form and an active GTP-bound form that is able to recruit to membranes different sets of downstream effectors directly responsible for vesicle formation, movement, tethering and fusion (PubMed:25962623). RAB6A acts as a regulator of COPI-independent retrograde transport from the Golgi apparatus towards the endoplasmic reticulum (ER) (PubMed:25962623). Has a low GTPase activity (PubMed:25962623). Recruits VPS13B to the Golgi membrane (PubMed:25492866). Plays a role in neuron projection development (Probable).</text>
</comment>
<comment type="catalytic activity">
    <reaction evidence="8">
        <text>GTP + H2O = GDP + phosphate + H(+)</text>
        <dbReference type="Rhea" id="RHEA:19669"/>
        <dbReference type="ChEBI" id="CHEBI:15377"/>
        <dbReference type="ChEBI" id="CHEBI:15378"/>
        <dbReference type="ChEBI" id="CHEBI:37565"/>
        <dbReference type="ChEBI" id="CHEBI:43474"/>
        <dbReference type="ChEBI" id="CHEBI:58189"/>
        <dbReference type="EC" id="3.6.5.2"/>
    </reaction>
    <physiologicalReaction direction="left-to-right" evidence="32">
        <dbReference type="Rhea" id="RHEA:19670"/>
    </physiologicalReaction>
</comment>
<comment type="cofactor">
    <cofactor evidence="8 11 13">
        <name>Mg(2+)</name>
        <dbReference type="ChEBI" id="CHEBI:18420"/>
    </cofactor>
</comment>
<comment type="activity regulation">
    <text evidence="31">Regulated by guanine nucleotide exchange factors (GEFs) which promote the exchange of bound GDP for free GTP. Regulated by GTPase activating proteins (GAPs) which increase the GTP hydrolysis activity (Probable). Inhibited by GDP dissociation inhibitors (GDIs) (Probable).</text>
</comment>
<comment type="subunit">
    <molecule>Isoform 1</molecule>
    <text evidence="5 10 14 19 21 22">Interacts (GTP-bound) with DYNLRB1; the interaction is direct (PubMed:18044744). Interacts with BICD1 (PubMed:12447383). Interacts with BICD2; the interaction is direct (PubMed:12447383, PubMed:20386726, PubMed:23664119, PubMed:25962623). Interacts (GTP-bound) with VPS13B (PubMed:25492866).</text>
</comment>
<comment type="subunit">
    <molecule>Isoform 2</molecule>
    <text evidence="5 10 21">Interacts with BICD1 (PubMed:12447383). Interacts (GDP-bound) with DYNLRB1; the interaction is direct (PubMed:18044744). Interacts (GTP-bound) with VPS13B (PubMed:25492866).</text>
</comment>
<comment type="subunit">
    <text evidence="2 3 6 9 11 12 13 15 18 20">Interacts with BICDL1; leads to its accumulation in the pericentrosomal region (By similarity). Interacts with SCYL1BP1 (PubMed:18997784). Interacts with VSP52 (PubMed:15878329). Interacts with RABGAP1 (PubMed:10202141). Interacts with GCC2 (via its GRIP domain) (PubMed:18243103). Interacts with RAB6IP1 (via its RUN 1 domain) (PubMed:19141279). Interacts with TMF1 (PubMed:17698061). Interacts with CIMAP3 (PubMed:20643351). Interacts (GTP-bound) with APBA1/MINT1 isoform 2, also called Mint1_826, but not with isoform 1 (PubMed:23737971). Interacts with RIC1; the interaction is direct with a preference for RAB6A-GDP (PubMed:23091056). Interacts with RGP1; the interaction is direct with a preference for RAB6A-GDP (PubMed:23091056).</text>
</comment>
<comment type="subunit">
    <text evidence="16">(Microbial infection) Interacts with human cytomegalovirus protein UL32.</text>
</comment>
<comment type="interaction">
    <interactant intactId="EBI-1052826">
        <id>P20340</id>
    </interactant>
    <interactant intactId="EBI-2372628">
        <id>Q8TD16</id>
        <label>BICD2</label>
    </interactant>
    <organismsDiffer>false</organismsDiffer>
    <experiments>3</experiments>
</comment>
<comment type="interaction">
    <interactant intactId="EBI-1052826">
        <id>P20340</id>
    </interactant>
    <interactant intactId="EBI-1645320">
        <id>Q8IWJ2</id>
        <label>GCC2</label>
    </interactant>
    <organismsDiffer>false</organismsDiffer>
    <experiments>4</experiments>
</comment>
<comment type="interaction">
    <interactant intactId="EBI-1052826">
        <id>P20340</id>
    </interactant>
    <interactant intactId="EBI-6148898">
        <id>Q01968</id>
        <label>OCRL</label>
    </interactant>
    <organismsDiffer>false</organismsDiffer>
    <experiments>13</experiments>
</comment>
<comment type="interaction">
    <interactant intactId="EBI-1052826">
        <id>P20340</id>
    </interactant>
    <interactant intactId="EBI-746784">
        <id>Q92871</id>
        <label>PMM1</label>
    </interactant>
    <organismsDiffer>false</organismsDiffer>
    <experiments>4</experiments>
</comment>
<comment type="interaction">
    <interactant intactId="EBI-8851226">
        <id>P20340-1</id>
    </interactant>
    <interactant intactId="EBI-9247455">
        <id>Q02410-2</id>
        <label>APBA1</label>
    </interactant>
    <organismsDiffer>false</organismsDiffer>
    <experiments>4</experiments>
</comment>
<comment type="interaction">
    <interactant intactId="EBI-8851226">
        <id>P20340-1</id>
    </interactant>
    <interactant intactId="EBI-15750630">
        <id>Q6PAL8</id>
        <label>Dennd5a</label>
    </interactant>
    <organismsDiffer>true</organismsDiffer>
    <experiments>4</experiments>
</comment>
<comment type="interaction">
    <interactant intactId="EBI-8851226">
        <id>P20340-1</id>
    </interactant>
    <interactant intactId="EBI-6417967">
        <id>Q5ZWZ3</id>
        <label>lpg0940</label>
    </interactant>
    <organismsDiffer>true</organismsDiffer>
    <experiments>2</experiments>
</comment>
<comment type="interaction">
    <interactant intactId="EBI-8840191">
        <id>P20340-2</id>
    </interactant>
    <interactant intactId="EBI-77613">
        <id>P05067</id>
        <label>APP</label>
    </interactant>
    <organismsDiffer>false</organismsDiffer>
    <experiments>3</experiments>
</comment>
<comment type="interaction">
    <interactant intactId="EBI-8840191">
        <id>P20340-2</id>
    </interactant>
    <interactant intactId="EBI-2875816">
        <id>Q9NP61</id>
        <label>ARFGAP3</label>
    </interactant>
    <organismsDiffer>false</organismsDiffer>
    <experiments>3</experiments>
</comment>
<comment type="interaction">
    <interactant intactId="EBI-8840191">
        <id>P20340-2</id>
    </interactant>
    <interactant intactId="EBI-711977">
        <id>P20042</id>
        <label>EIF2S2</label>
    </interactant>
    <organismsDiffer>false</organismsDiffer>
    <experiments>3</experiments>
</comment>
<comment type="interaction">
    <interactant intactId="EBI-8840191">
        <id>P20340-2</id>
    </interactant>
    <interactant intactId="EBI-746784">
        <id>Q92871</id>
        <label>PMM1</label>
    </interactant>
    <organismsDiffer>false</organismsDiffer>
    <experiments>3</experiments>
</comment>
<comment type="interaction">
    <interactant intactId="EBI-8840191">
        <id>P20340-2</id>
    </interactant>
    <interactant intactId="EBI-12938570">
        <id>Q16560-2</id>
        <label>SNRNP35</label>
    </interactant>
    <organismsDiffer>false</organismsDiffer>
    <experiments>3</experiments>
</comment>
<comment type="subcellular location">
    <subcellularLocation>
        <location evidence="18 22">Golgi apparatus membrane</location>
        <topology evidence="22">Lipid-anchor</topology>
    </subcellularLocation>
    <subcellularLocation>
        <location evidence="2">Cytoplasmic vesicle</location>
        <location evidence="2">Secretory vesicle</location>
        <location evidence="2">Acrosome membrane</location>
        <topology evidence="31">Peripheral membrane protein</topology>
    </subcellularLocation>
    <text evidence="22">BICD2 facilitates its targeting to Golgi apparatus membrane.</text>
</comment>
<comment type="subcellular location">
    <molecule>Isoform 1</molecule>
    <subcellularLocation>
        <location evidence="4">Golgi apparatus membrane</location>
        <topology evidence="31">Lipid-anchor</topology>
    </subcellularLocation>
</comment>
<comment type="subcellular location">
    <molecule>Isoform 2</molecule>
    <subcellularLocation>
        <location evidence="4">Golgi apparatus membrane</location>
        <topology evidence="31">Lipid-anchor</topology>
    </subcellularLocation>
</comment>
<comment type="alternative products">
    <event type="alternative splicing"/>
    <isoform>
        <id>P20340-1</id>
        <name>1</name>
        <name>Rab-6a</name>
        <sequence type="displayed"/>
    </isoform>
    <isoform>
        <id>P20340-2</id>
        <name>2</name>
        <name>Rab-6a'</name>
        <name>Rab-6C</name>
        <name>Rab6C</name>
        <sequence type="described" ref="VSP_005527"/>
    </isoform>
    <isoform>
        <id>P20340-3</id>
        <name>3</name>
        <sequence type="described" ref="VSP_045302"/>
    </isoform>
    <isoform>
        <id>P20340-4</id>
        <name>4</name>
        <sequence type="described" ref="VSP_046967 VSP_005527"/>
    </isoform>
</comment>
<comment type="tissue specificity">
    <text evidence="4">Ubiquitous.</text>
</comment>
<comment type="domain">
    <text evidence="13">Switch 1, switch 2 and the interswitch regions are characteristic of Rab GTPases and mediate the interactions with Rab downstream effectors. The switch regions undergo conformational changes upon nucleotide binding which drives interaction with specific sets of effector proteins, with most effectors only binding to GTP-bound Rab.</text>
</comment>
<comment type="PTM">
    <text evidence="22">Prenylated.</text>
</comment>
<comment type="similarity">
    <text evidence="31">Belongs to the small GTPase superfamily. Rab family.</text>
</comment>
<sequence length="208" mass="23593">MSTGGDFGNPLRKFKLVFLGEQSVGKTSLITRFMYDSFDNTYQATIGIDFLSKTMYLEDRTVRLQLWDTAGQERFRSLIPSYIRDSTVAVVVYDITNVNSFQQTTKWIDDVRTERGSDVIIMLVGNKTDLADKRQVSIEEGERKAKELNVMFIETSAKAGYNVKQLFRRVAAALPGMESTQDRSREDMIDIKLEKPQEQPVSEGGCSC</sequence>
<keyword id="KW-0002">3D-structure</keyword>
<keyword id="KW-0007">Acetylation</keyword>
<keyword id="KW-0025">Alternative splicing</keyword>
<keyword id="KW-0968">Cytoplasmic vesicle</keyword>
<keyword id="KW-0903">Direct protein sequencing</keyword>
<keyword id="KW-0931">ER-Golgi transport</keyword>
<keyword id="KW-0333">Golgi apparatus</keyword>
<keyword id="KW-0342">GTP-binding</keyword>
<keyword id="KW-0945">Host-virus interaction</keyword>
<keyword id="KW-0378">Hydrolase</keyword>
<keyword id="KW-0449">Lipoprotein</keyword>
<keyword id="KW-0472">Membrane</keyword>
<keyword id="KW-0488">Methylation</keyword>
<keyword id="KW-0547">Nucleotide-binding</keyword>
<keyword id="KW-0597">Phosphoprotein</keyword>
<keyword id="KW-0636">Prenylation</keyword>
<keyword id="KW-0653">Protein transport</keyword>
<keyword id="KW-1267">Proteomics identification</keyword>
<keyword id="KW-1185">Reference proteome</keyword>
<keyword id="KW-0813">Transport</keyword>
<dbReference type="EC" id="3.6.5.2" evidence="8"/>
<dbReference type="EMBL" id="M28212">
    <property type="protein sequence ID" value="AAA60246.1"/>
    <property type="molecule type" value="mRNA"/>
</dbReference>
<dbReference type="EMBL" id="AF130986">
    <property type="protein sequence ID" value="AAD25535.1"/>
    <property type="molecule type" value="mRNA"/>
</dbReference>
<dbReference type="EMBL" id="AF119836">
    <property type="protein sequence ID" value="AAF23593.1"/>
    <property type="molecule type" value="mRNA"/>
</dbReference>
<dbReference type="EMBL" id="AF198616">
    <property type="protein sequence ID" value="AAF73841.1"/>
    <property type="molecule type" value="mRNA"/>
</dbReference>
<dbReference type="EMBL" id="AF130122">
    <property type="protein sequence ID" value="AAD27707.1"/>
    <property type="molecule type" value="mRNA"/>
</dbReference>
<dbReference type="EMBL" id="DQ437503">
    <property type="protein sequence ID" value="ABD93919.1"/>
    <property type="molecule type" value="mRNA"/>
</dbReference>
<dbReference type="EMBL" id="AK057157">
    <property type="protein sequence ID" value="BAB71371.1"/>
    <property type="molecule type" value="mRNA"/>
</dbReference>
<dbReference type="EMBL" id="AK289748">
    <property type="protein sequence ID" value="BAF82437.1"/>
    <property type="molecule type" value="mRNA"/>
</dbReference>
<dbReference type="EMBL" id="AK290132">
    <property type="protein sequence ID" value="BAF82821.1"/>
    <property type="molecule type" value="mRNA"/>
</dbReference>
<dbReference type="EMBL" id="AK301534">
    <property type="protein sequence ID" value="BAH13508.1"/>
    <property type="molecule type" value="mRNA"/>
</dbReference>
<dbReference type="EMBL" id="AF498939">
    <property type="protein sequence ID" value="AAM21087.1"/>
    <property type="molecule type" value="mRNA"/>
</dbReference>
<dbReference type="EMBL" id="AF498941">
    <property type="protein sequence ID" value="AAM21089.1"/>
    <property type="molecule type" value="mRNA"/>
</dbReference>
<dbReference type="EMBL" id="BT019698">
    <property type="protein sequence ID" value="AAV38504.1"/>
    <property type="molecule type" value="mRNA"/>
</dbReference>
<dbReference type="EMBL" id="AP002770">
    <property type="status" value="NOT_ANNOTATED_CDS"/>
    <property type="molecule type" value="Genomic_DNA"/>
</dbReference>
<dbReference type="EMBL" id="AP002993">
    <property type="status" value="NOT_ANNOTATED_CDS"/>
    <property type="molecule type" value="Genomic_DNA"/>
</dbReference>
<dbReference type="EMBL" id="BC003617">
    <property type="protein sequence ID" value="AAH03617.1"/>
    <property type="molecule type" value="mRNA"/>
</dbReference>
<dbReference type="EMBL" id="BC068486">
    <property type="protein sequence ID" value="AAH68486.1"/>
    <property type="molecule type" value="mRNA"/>
</dbReference>
<dbReference type="EMBL" id="BC096818">
    <property type="protein sequence ID" value="AAH96818.1"/>
    <property type="molecule type" value="mRNA"/>
</dbReference>
<dbReference type="CCDS" id="CCDS58155.1">
    <molecule id="P20340-4"/>
</dbReference>
<dbReference type="CCDS" id="CCDS58156.1">
    <molecule id="P20340-3"/>
</dbReference>
<dbReference type="CCDS" id="CCDS8223.1">
    <molecule id="P20340-2"/>
</dbReference>
<dbReference type="CCDS" id="CCDS8224.1">
    <molecule id="P20340-1"/>
</dbReference>
<dbReference type="PIR" id="G34323">
    <property type="entry name" value="G34323"/>
</dbReference>
<dbReference type="RefSeq" id="NP_001230647.1">
    <molecule id="P20340-3"/>
    <property type="nucleotide sequence ID" value="NM_001243718.2"/>
</dbReference>
<dbReference type="RefSeq" id="NP_001230648.1">
    <molecule id="P20340-4"/>
    <property type="nucleotide sequence ID" value="NM_001243719.2"/>
</dbReference>
<dbReference type="RefSeq" id="NP_002860.2">
    <molecule id="P20340-2"/>
    <property type="nucleotide sequence ID" value="NM_002869.4"/>
</dbReference>
<dbReference type="RefSeq" id="NP_942599.1">
    <molecule id="P20340-1"/>
    <property type="nucleotide sequence ID" value="NM_198896.2"/>
</dbReference>
<dbReference type="PDB" id="1YZQ">
    <property type="method" value="X-ray"/>
    <property type="resolution" value="1.78 A"/>
    <property type="chains" value="A=10-177"/>
</dbReference>
<dbReference type="PDB" id="2GIL">
    <property type="method" value="X-ray"/>
    <property type="resolution" value="1.82 A"/>
    <property type="chains" value="A/B/C/D=13-174"/>
</dbReference>
<dbReference type="PDB" id="3BBP">
    <property type="method" value="X-ray"/>
    <property type="resolution" value="3.00 A"/>
    <property type="chains" value="A/B/C=1-206"/>
</dbReference>
<dbReference type="PDB" id="3CWZ">
    <property type="method" value="X-ray"/>
    <property type="resolution" value="3.20 A"/>
    <property type="chains" value="A=8-195"/>
</dbReference>
<dbReference type="PDB" id="4DKX">
    <property type="method" value="X-ray"/>
    <property type="resolution" value="1.90 A"/>
    <property type="chains" value="A/B=1-208"/>
</dbReference>
<dbReference type="PDB" id="5LEF">
    <property type="method" value="X-ray"/>
    <property type="resolution" value="2.09 A"/>
    <property type="chains" value="A/B=8-195"/>
</dbReference>
<dbReference type="PDBsum" id="1YZQ"/>
<dbReference type="PDBsum" id="2GIL"/>
<dbReference type="PDBsum" id="3BBP"/>
<dbReference type="PDBsum" id="3CWZ"/>
<dbReference type="PDBsum" id="4DKX"/>
<dbReference type="PDBsum" id="5LEF"/>
<dbReference type="SMR" id="P20340"/>
<dbReference type="BioGRID" id="111808">
    <property type="interactions" value="151"/>
</dbReference>
<dbReference type="DIP" id="DIP-39668N"/>
<dbReference type="FunCoup" id="P20340">
    <property type="interactions" value="3218"/>
</dbReference>
<dbReference type="IntAct" id="P20340">
    <property type="interactions" value="60"/>
</dbReference>
<dbReference type="MINT" id="P20340"/>
<dbReference type="STRING" id="9606.ENSP00000311449"/>
<dbReference type="BindingDB" id="P20340"/>
<dbReference type="ChEMBL" id="CHEMBL4105703"/>
<dbReference type="GlyGen" id="P20340">
    <property type="glycosylation" value="1 site, 1 O-linked glycan (1 site)"/>
</dbReference>
<dbReference type="iPTMnet" id="P20340"/>
<dbReference type="MetOSite" id="P20340"/>
<dbReference type="PhosphoSitePlus" id="P20340"/>
<dbReference type="SwissPalm" id="P20340"/>
<dbReference type="BioMuta" id="RAB6A"/>
<dbReference type="DMDM" id="131796"/>
<dbReference type="jPOST" id="P20340"/>
<dbReference type="MassIVE" id="P20340"/>
<dbReference type="PaxDb" id="9606-ENSP00000311449"/>
<dbReference type="PeptideAtlas" id="P20340"/>
<dbReference type="ProteomicsDB" id="27097"/>
<dbReference type="ProteomicsDB" id="53752">
    <molecule id="P20340-1"/>
</dbReference>
<dbReference type="ProteomicsDB" id="53753">
    <molecule id="P20340-2"/>
</dbReference>
<dbReference type="ProteomicsDB" id="61249"/>
<dbReference type="Pumba" id="P20340"/>
<dbReference type="TopDownProteomics" id="P20340-2">
    <molecule id="P20340-2"/>
</dbReference>
<dbReference type="ABCD" id="P20340">
    <property type="antibodies" value="1 sequenced antibody"/>
</dbReference>
<dbReference type="Antibodypedia" id="4093">
    <property type="antibodies" value="294 antibodies from 33 providers"/>
</dbReference>
<dbReference type="DNASU" id="5870"/>
<dbReference type="Ensembl" id="ENST00000310653.10">
    <molecule id="P20340-2"/>
    <property type="protein sequence ID" value="ENSP00000311449.5"/>
    <property type="gene ID" value="ENSG00000175582.20"/>
</dbReference>
<dbReference type="Ensembl" id="ENST00000336083.8">
    <molecule id="P20340-1"/>
    <property type="protein sequence ID" value="ENSP00000336850.3"/>
    <property type="gene ID" value="ENSG00000175582.20"/>
</dbReference>
<dbReference type="Ensembl" id="ENST00000541588.5">
    <molecule id="P20340-3"/>
    <property type="protein sequence ID" value="ENSP00000445350.1"/>
    <property type="gene ID" value="ENSG00000175582.20"/>
</dbReference>
<dbReference type="Ensembl" id="ENST00000541973.5">
    <molecule id="P20340-4"/>
    <property type="protein sequence ID" value="ENSP00000443782.2"/>
    <property type="gene ID" value="ENSG00000175582.20"/>
</dbReference>
<dbReference type="GeneID" id="5870"/>
<dbReference type="KEGG" id="hsa:5870"/>
<dbReference type="MANE-Select" id="ENST00000336083.8">
    <property type="protein sequence ID" value="ENSP00000336850.3"/>
    <property type="RefSeq nucleotide sequence ID" value="NM_198896.2"/>
    <property type="RefSeq protein sequence ID" value="NP_942599.1"/>
</dbReference>
<dbReference type="UCSC" id="uc001oue.4">
    <molecule id="P20340-1"/>
    <property type="organism name" value="human"/>
</dbReference>
<dbReference type="AGR" id="HGNC:9786"/>
<dbReference type="CTD" id="5870"/>
<dbReference type="DisGeNET" id="5870"/>
<dbReference type="GeneCards" id="RAB6A"/>
<dbReference type="HGNC" id="HGNC:9786">
    <property type="gene designation" value="RAB6A"/>
</dbReference>
<dbReference type="HPA" id="ENSG00000175582">
    <property type="expression patterns" value="Low tissue specificity"/>
</dbReference>
<dbReference type="MIM" id="179513">
    <property type="type" value="gene"/>
</dbReference>
<dbReference type="neXtProt" id="NX_P20340"/>
<dbReference type="OpenTargets" id="ENSG00000175582"/>
<dbReference type="PharmGKB" id="PA34146"/>
<dbReference type="VEuPathDB" id="HostDB:ENSG00000175582"/>
<dbReference type="eggNOG" id="KOG0094">
    <property type="taxonomic scope" value="Eukaryota"/>
</dbReference>
<dbReference type="GeneTree" id="ENSGT00940000154769"/>
<dbReference type="HOGENOM" id="CLU_041217_10_2_1"/>
<dbReference type="InParanoid" id="P20340"/>
<dbReference type="OMA" id="PVSNDGC"/>
<dbReference type="OrthoDB" id="63533at2759"/>
<dbReference type="PAN-GO" id="P20340">
    <property type="GO annotations" value="7 GO annotations based on evolutionary models"/>
</dbReference>
<dbReference type="PhylomeDB" id="P20340"/>
<dbReference type="TreeFam" id="TF300803"/>
<dbReference type="PathwayCommons" id="P20340"/>
<dbReference type="Reactome" id="R-HSA-1912420">
    <property type="pathway name" value="Pre-NOTCH Processing in Golgi"/>
</dbReference>
<dbReference type="Reactome" id="R-HSA-6798695">
    <property type="pathway name" value="Neutrophil degranulation"/>
</dbReference>
<dbReference type="Reactome" id="R-HSA-6811436">
    <property type="pathway name" value="COPI-independent Golgi-to-ER retrograde traffic"/>
</dbReference>
<dbReference type="Reactome" id="R-HSA-6811440">
    <property type="pathway name" value="Retrograde transport at the Trans-Golgi-Network"/>
</dbReference>
<dbReference type="Reactome" id="R-HSA-8854214">
    <property type="pathway name" value="TBC/RABGAPs"/>
</dbReference>
<dbReference type="Reactome" id="R-HSA-8873719">
    <property type="pathway name" value="RAB geranylgeranylation"/>
</dbReference>
<dbReference type="Reactome" id="R-HSA-8876198">
    <property type="pathway name" value="RAB GEFs exchange GTP for GDP on RABs"/>
</dbReference>
<dbReference type="SignaLink" id="P20340"/>
<dbReference type="SIGNOR" id="P20340"/>
<dbReference type="BioGRID-ORCS" id="5870">
    <property type="hits" value="337 hits in 1097 CRISPR screens"/>
</dbReference>
<dbReference type="CD-CODE" id="91857CE7">
    <property type="entry name" value="Nucleolus"/>
</dbReference>
<dbReference type="CD-CODE" id="FB4E32DD">
    <property type="entry name" value="Presynaptic clusters and postsynaptic densities"/>
</dbReference>
<dbReference type="ChiTaRS" id="RAB6A">
    <property type="organism name" value="human"/>
</dbReference>
<dbReference type="EvolutionaryTrace" id="P20340"/>
<dbReference type="GeneWiki" id="RAB6A"/>
<dbReference type="GenomeRNAi" id="5870"/>
<dbReference type="Pharos" id="P20340">
    <property type="development level" value="Tchem"/>
</dbReference>
<dbReference type="PRO" id="PR:P20340"/>
<dbReference type="Proteomes" id="UP000005640">
    <property type="component" value="Chromosome 11"/>
</dbReference>
<dbReference type="RNAct" id="P20340">
    <property type="molecule type" value="protein"/>
</dbReference>
<dbReference type="Bgee" id="ENSG00000175582">
    <property type="expression patterns" value="Expressed in cortical plate and 169 other cell types or tissues"/>
</dbReference>
<dbReference type="ExpressionAtlas" id="P20340">
    <property type="expression patterns" value="baseline and differential"/>
</dbReference>
<dbReference type="GO" id="GO:0002080">
    <property type="term" value="C:acrosomal membrane"/>
    <property type="evidence" value="ECO:0000250"/>
    <property type="project" value="UniProtKB"/>
</dbReference>
<dbReference type="GO" id="GO:0036064">
    <property type="term" value="C:ciliary basal body"/>
    <property type="evidence" value="ECO:0000314"/>
    <property type="project" value="HPA"/>
</dbReference>
<dbReference type="GO" id="GO:0031410">
    <property type="term" value="C:cytoplasmic vesicle"/>
    <property type="evidence" value="ECO:0000314"/>
    <property type="project" value="BHF-UCL"/>
</dbReference>
<dbReference type="GO" id="GO:0005829">
    <property type="term" value="C:cytosol"/>
    <property type="evidence" value="ECO:0000314"/>
    <property type="project" value="BHF-UCL"/>
</dbReference>
<dbReference type="GO" id="GO:0012505">
    <property type="term" value="C:endomembrane system"/>
    <property type="evidence" value="ECO:0000318"/>
    <property type="project" value="GO_Central"/>
</dbReference>
<dbReference type="GO" id="GO:0005789">
    <property type="term" value="C:endoplasmic reticulum membrane"/>
    <property type="evidence" value="ECO:0000304"/>
    <property type="project" value="Reactome"/>
</dbReference>
<dbReference type="GO" id="GO:0070381">
    <property type="term" value="C:endosome to plasma membrane transport vesicle"/>
    <property type="evidence" value="ECO:0000314"/>
    <property type="project" value="UniProtKB"/>
</dbReference>
<dbReference type="GO" id="GO:0070062">
    <property type="term" value="C:extracellular exosome"/>
    <property type="evidence" value="ECO:0007005"/>
    <property type="project" value="UniProtKB"/>
</dbReference>
<dbReference type="GO" id="GO:0005794">
    <property type="term" value="C:Golgi apparatus"/>
    <property type="evidence" value="ECO:0000314"/>
    <property type="project" value="HPA"/>
</dbReference>
<dbReference type="GO" id="GO:0000139">
    <property type="term" value="C:Golgi membrane"/>
    <property type="evidence" value="ECO:0000314"/>
    <property type="project" value="UniProtKB"/>
</dbReference>
<dbReference type="GO" id="GO:0016020">
    <property type="term" value="C:membrane"/>
    <property type="evidence" value="ECO:0000314"/>
    <property type="project" value="BHF-UCL"/>
</dbReference>
<dbReference type="GO" id="GO:0005654">
    <property type="term" value="C:nucleoplasm"/>
    <property type="evidence" value="ECO:0000314"/>
    <property type="project" value="HPA"/>
</dbReference>
<dbReference type="GO" id="GO:0005886">
    <property type="term" value="C:plasma membrane"/>
    <property type="evidence" value="ECO:0000304"/>
    <property type="project" value="Reactome"/>
</dbReference>
<dbReference type="GO" id="GO:0030667">
    <property type="term" value="C:secretory granule membrane"/>
    <property type="evidence" value="ECO:0000304"/>
    <property type="project" value="Reactome"/>
</dbReference>
<dbReference type="GO" id="GO:0005802">
    <property type="term" value="C:trans-Golgi network"/>
    <property type="evidence" value="ECO:0000314"/>
    <property type="project" value="BHF-UCL"/>
</dbReference>
<dbReference type="GO" id="GO:0032588">
    <property type="term" value="C:trans-Golgi network membrane"/>
    <property type="evidence" value="ECO:0000304"/>
    <property type="project" value="Reactome"/>
</dbReference>
<dbReference type="GO" id="GO:0005525">
    <property type="term" value="F:GTP binding"/>
    <property type="evidence" value="ECO:0000314"/>
    <property type="project" value="UniProtKB"/>
</dbReference>
<dbReference type="GO" id="GO:0003924">
    <property type="term" value="F:GTPase activity"/>
    <property type="evidence" value="ECO:0000314"/>
    <property type="project" value="UniProtKB"/>
</dbReference>
<dbReference type="GO" id="GO:0031489">
    <property type="term" value="F:myosin V binding"/>
    <property type="evidence" value="ECO:0000353"/>
    <property type="project" value="UniProtKB"/>
</dbReference>
<dbReference type="GO" id="GO:0019904">
    <property type="term" value="F:protein domain specific binding"/>
    <property type="evidence" value="ECO:0000353"/>
    <property type="project" value="BHF-UCL"/>
</dbReference>
<dbReference type="GO" id="GO:0019882">
    <property type="term" value="P:antigen processing and presentation"/>
    <property type="evidence" value="ECO:0000315"/>
    <property type="project" value="UniProtKB"/>
</dbReference>
<dbReference type="GO" id="GO:0034498">
    <property type="term" value="P:early endosome to Golgi transport"/>
    <property type="evidence" value="ECO:0000315"/>
    <property type="project" value="UniProtKB"/>
</dbReference>
<dbReference type="GO" id="GO:0006891">
    <property type="term" value="P:intra-Golgi vesicle-mediated transport"/>
    <property type="evidence" value="ECO:0000318"/>
    <property type="project" value="GO_Central"/>
</dbReference>
<dbReference type="GO" id="GO:0006886">
    <property type="term" value="P:intracellular protein transport"/>
    <property type="evidence" value="ECO:0000318"/>
    <property type="project" value="GO_Central"/>
</dbReference>
<dbReference type="GO" id="GO:0072385">
    <property type="term" value="P:minus-end-directed organelle transport along microtubule"/>
    <property type="evidence" value="ECO:0000304"/>
    <property type="project" value="BHF-UCL"/>
</dbReference>
<dbReference type="GO" id="GO:0031175">
    <property type="term" value="P:neuron projection development"/>
    <property type="evidence" value="ECO:0000304"/>
    <property type="project" value="UniProtKB"/>
</dbReference>
<dbReference type="GO" id="GO:0018125">
    <property type="term" value="P:peptidyl-cysteine methylation"/>
    <property type="evidence" value="ECO:0000314"/>
    <property type="project" value="MGI"/>
</dbReference>
<dbReference type="GO" id="GO:0034067">
    <property type="term" value="P:protein localization to Golgi apparatus"/>
    <property type="evidence" value="ECO:0000314"/>
    <property type="project" value="UniProtKB"/>
</dbReference>
<dbReference type="GO" id="GO:1903292">
    <property type="term" value="P:protein localization to Golgi membrane"/>
    <property type="evidence" value="ECO:0000315"/>
    <property type="project" value="UniProtKB"/>
</dbReference>
<dbReference type="GO" id="GO:0042147">
    <property type="term" value="P:retrograde transport, endosome to Golgi"/>
    <property type="evidence" value="ECO:0000318"/>
    <property type="project" value="GO_Central"/>
</dbReference>
<dbReference type="GO" id="GO:0006890">
    <property type="term" value="P:retrograde vesicle-mediated transport, Golgi to endoplasmic reticulum"/>
    <property type="evidence" value="ECO:0000315"/>
    <property type="project" value="UniProtKB"/>
</dbReference>
<dbReference type="CDD" id="cd01861">
    <property type="entry name" value="Rab6"/>
    <property type="match status" value="1"/>
</dbReference>
<dbReference type="DisProt" id="DP02733"/>
<dbReference type="FunFam" id="3.40.50.300:FF:000139">
    <property type="entry name" value="ras-related protein Rab-6A isoform X1"/>
    <property type="match status" value="1"/>
</dbReference>
<dbReference type="Gene3D" id="3.40.50.300">
    <property type="entry name" value="P-loop containing nucleotide triphosphate hydrolases"/>
    <property type="match status" value="1"/>
</dbReference>
<dbReference type="InterPro" id="IPR027417">
    <property type="entry name" value="P-loop_NTPase"/>
</dbReference>
<dbReference type="InterPro" id="IPR050227">
    <property type="entry name" value="Rab"/>
</dbReference>
<dbReference type="InterPro" id="IPR005225">
    <property type="entry name" value="Small_GTP-bd"/>
</dbReference>
<dbReference type="InterPro" id="IPR001806">
    <property type="entry name" value="Small_GTPase"/>
</dbReference>
<dbReference type="NCBIfam" id="TIGR00231">
    <property type="entry name" value="small_GTP"/>
    <property type="match status" value="1"/>
</dbReference>
<dbReference type="PANTHER" id="PTHR47977">
    <property type="entry name" value="RAS-RELATED PROTEIN RAB"/>
    <property type="match status" value="1"/>
</dbReference>
<dbReference type="Pfam" id="PF00071">
    <property type="entry name" value="Ras"/>
    <property type="match status" value="1"/>
</dbReference>
<dbReference type="PRINTS" id="PR00449">
    <property type="entry name" value="RASTRNSFRMNG"/>
</dbReference>
<dbReference type="SMART" id="SM00175">
    <property type="entry name" value="RAB"/>
    <property type="match status" value="1"/>
</dbReference>
<dbReference type="SMART" id="SM00176">
    <property type="entry name" value="RAN"/>
    <property type="match status" value="1"/>
</dbReference>
<dbReference type="SMART" id="SM00173">
    <property type="entry name" value="RAS"/>
    <property type="match status" value="1"/>
</dbReference>
<dbReference type="SMART" id="SM00174">
    <property type="entry name" value="RHO"/>
    <property type="match status" value="1"/>
</dbReference>
<dbReference type="SUPFAM" id="SSF52540">
    <property type="entry name" value="P-loop containing nucleoside triphosphate hydrolases"/>
    <property type="match status" value="1"/>
</dbReference>
<dbReference type="PROSITE" id="PS51419">
    <property type="entry name" value="RAB"/>
    <property type="match status" value="1"/>
</dbReference>
<evidence type="ECO:0000250" key="1"/>
<evidence type="ECO:0000250" key="2">
    <source>
        <dbReference type="UniProtKB" id="P35279"/>
    </source>
</evidence>
<evidence type="ECO:0000269" key="3">
    <source>
    </source>
</evidence>
<evidence type="ECO:0000269" key="4">
    <source>
    </source>
</evidence>
<evidence type="ECO:0000269" key="5">
    <source>
    </source>
</evidence>
<evidence type="ECO:0000269" key="6">
    <source>
    </source>
</evidence>
<evidence type="ECO:0000269" key="7">
    <source>
    </source>
</evidence>
<evidence type="ECO:0000269" key="8">
    <source>
    </source>
</evidence>
<evidence type="ECO:0000269" key="9">
    <source>
    </source>
</evidence>
<evidence type="ECO:0000269" key="10">
    <source>
    </source>
</evidence>
<evidence type="ECO:0000269" key="11">
    <source>
    </source>
</evidence>
<evidence type="ECO:0000269" key="12">
    <source>
    </source>
</evidence>
<evidence type="ECO:0000269" key="13">
    <source>
    </source>
</evidence>
<evidence type="ECO:0000269" key="14">
    <source>
    </source>
</evidence>
<evidence type="ECO:0000269" key="15">
    <source>
    </source>
</evidence>
<evidence type="ECO:0000269" key="16">
    <source>
    </source>
</evidence>
<evidence type="ECO:0000269" key="17">
    <source>
    </source>
</evidence>
<evidence type="ECO:0000269" key="18">
    <source>
    </source>
</evidence>
<evidence type="ECO:0000269" key="19">
    <source>
    </source>
</evidence>
<evidence type="ECO:0000269" key="20">
    <source>
    </source>
</evidence>
<evidence type="ECO:0000269" key="21">
    <source>
    </source>
</evidence>
<evidence type="ECO:0000269" key="22">
    <source>
    </source>
</evidence>
<evidence type="ECO:0000269" key="23">
    <source ref="12"/>
</evidence>
<evidence type="ECO:0000303" key="24">
    <source>
    </source>
</evidence>
<evidence type="ECO:0000303" key="25">
    <source>
    </source>
</evidence>
<evidence type="ECO:0000303" key="26">
    <source>
    </source>
</evidence>
<evidence type="ECO:0000303" key="27">
    <source>
    </source>
</evidence>
<evidence type="ECO:0000303" key="28">
    <source ref="5"/>
</evidence>
<evidence type="ECO:0000303" key="29">
    <source ref="6"/>
</evidence>
<evidence type="ECO:0000303" key="30">
    <source ref="8"/>
</evidence>
<evidence type="ECO:0000305" key="31"/>
<evidence type="ECO:0000305" key="32">
    <source>
    </source>
</evidence>
<evidence type="ECO:0000305" key="33">
    <source>
    </source>
</evidence>
<evidence type="ECO:0000312" key="34">
    <source>
        <dbReference type="HGNC" id="HGNC:9786"/>
    </source>
</evidence>
<evidence type="ECO:0007744" key="35">
    <source>
        <dbReference type="PDB" id="1YZQ"/>
    </source>
</evidence>
<evidence type="ECO:0007744" key="36">
    <source>
        <dbReference type="PDB" id="2GIL"/>
    </source>
</evidence>
<evidence type="ECO:0007744" key="37">
    <source>
        <dbReference type="PDB" id="3BBP"/>
    </source>
</evidence>
<evidence type="ECO:0007744" key="38">
    <source>
        <dbReference type="PDB" id="3CWZ"/>
    </source>
</evidence>
<evidence type="ECO:0007744" key="39">
    <source>
    </source>
</evidence>
<evidence type="ECO:0007744" key="40">
    <source>
    </source>
</evidence>
<evidence type="ECO:0007744" key="41">
    <source>
    </source>
</evidence>
<evidence type="ECO:0007744" key="42">
    <source>
    </source>
</evidence>
<evidence type="ECO:0007744" key="43">
    <source>
    </source>
</evidence>
<evidence type="ECO:0007829" key="44">
    <source>
        <dbReference type="PDB" id="1YZQ"/>
    </source>
</evidence>
<evidence type="ECO:0007829" key="45">
    <source>
        <dbReference type="PDB" id="3BBP"/>
    </source>
</evidence>
<protein>
    <recommendedName>
        <fullName>Ras-related protein Rab-6A</fullName>
        <shortName>Rab-6</shortName>
        <ecNumber evidence="8">3.6.5.2</ecNumber>
    </recommendedName>
</protein>
<feature type="initiator methionine" description="Removed" evidence="23 39 40 41 42 43">
    <location>
        <position position="1"/>
    </location>
</feature>
<feature type="chain" id="PRO_0000121112" description="Ras-related protein Rab-6A">
    <location>
        <begin position="2"/>
        <end position="208"/>
    </location>
</feature>
<feature type="short sequence motif" description="Switch 1" evidence="13 38">
    <location>
        <begin position="32"/>
        <end position="50"/>
    </location>
</feature>
<feature type="short sequence motif" description="Switch 2" evidence="13 38">
    <location>
        <begin position="69"/>
        <end position="88"/>
    </location>
</feature>
<feature type="binding site" evidence="8 11 13 36 37 38">
    <location>
        <position position="23"/>
    </location>
    <ligand>
        <name>GTP</name>
        <dbReference type="ChEBI" id="CHEBI:37565"/>
    </ligand>
</feature>
<feature type="binding site" evidence="8 11 36 37">
    <location>
        <position position="24"/>
    </location>
    <ligand>
        <name>GTP</name>
        <dbReference type="ChEBI" id="CHEBI:37565"/>
    </ligand>
</feature>
<feature type="binding site" evidence="8 11 13 36 37 38">
    <location>
        <position position="25"/>
    </location>
    <ligand>
        <name>GTP</name>
        <dbReference type="ChEBI" id="CHEBI:37565"/>
    </ligand>
</feature>
<feature type="binding site" evidence="8 11 13 36 37 38">
    <location>
        <position position="26"/>
    </location>
    <ligand>
        <name>GTP</name>
        <dbReference type="ChEBI" id="CHEBI:37565"/>
    </ligand>
</feature>
<feature type="binding site" evidence="8 11 13 36 37 38">
    <location>
        <position position="27"/>
    </location>
    <ligand>
        <name>GTP</name>
        <dbReference type="ChEBI" id="CHEBI:37565"/>
    </ligand>
</feature>
<feature type="binding site" evidence="7 8 11 13 35 36 37 38">
    <location>
        <position position="27"/>
    </location>
    <ligand>
        <name>Mg(2+)</name>
        <dbReference type="ChEBI" id="CHEBI:18420"/>
    </ligand>
</feature>
<feature type="binding site" evidence="8 11 13 36 37 38">
    <location>
        <position position="28"/>
    </location>
    <ligand>
        <name>GTP</name>
        <dbReference type="ChEBI" id="CHEBI:37565"/>
    </ligand>
</feature>
<feature type="binding site" evidence="8 11 36 37">
    <location>
        <position position="39"/>
    </location>
    <ligand>
        <name>GTP</name>
        <dbReference type="ChEBI" id="CHEBI:37565"/>
    </ligand>
</feature>
<feature type="binding site" evidence="8 11 13 36 37 38">
    <location>
        <position position="40"/>
    </location>
    <ligand>
        <name>GTP</name>
        <dbReference type="ChEBI" id="CHEBI:37565"/>
    </ligand>
</feature>
<feature type="binding site" evidence="8 11 13 36 37 38">
    <location>
        <position position="42"/>
    </location>
    <ligand>
        <name>GTP</name>
        <dbReference type="ChEBI" id="CHEBI:37565"/>
    </ligand>
</feature>
<feature type="binding site" evidence="8 11 13 36 37 38">
    <location>
        <position position="45"/>
    </location>
    <ligand>
        <name>GTP</name>
        <dbReference type="ChEBI" id="CHEBI:37565"/>
    </ligand>
</feature>
<feature type="binding site" evidence="7 8 11 13 35 36 37 38">
    <location>
        <position position="45"/>
    </location>
    <ligand>
        <name>Mg(2+)</name>
        <dbReference type="ChEBI" id="CHEBI:18420"/>
    </ligand>
</feature>
<feature type="binding site" evidence="8 11 13 36 37 38">
    <location>
        <position position="68"/>
    </location>
    <ligand>
        <name>Mg(2+)</name>
        <dbReference type="ChEBI" id="CHEBI:18420"/>
    </ligand>
</feature>
<feature type="binding site" evidence="8 11 13 36 37 38">
    <location>
        <position position="71"/>
    </location>
    <ligand>
        <name>GTP</name>
        <dbReference type="ChEBI" id="CHEBI:37565"/>
    </ligand>
</feature>
<feature type="binding site" evidence="8 13 36 38">
    <location>
        <position position="126"/>
    </location>
    <ligand>
        <name>GTP</name>
        <dbReference type="ChEBI" id="CHEBI:37565"/>
    </ligand>
</feature>
<feature type="binding site" evidence="8 11 13 36 37 38">
    <location>
        <position position="127"/>
    </location>
    <ligand>
        <name>GTP</name>
        <dbReference type="ChEBI" id="CHEBI:37565"/>
    </ligand>
</feature>
<feature type="binding site" evidence="8 11 13 36 37 38">
    <location>
        <position position="129"/>
    </location>
    <ligand>
        <name>GTP</name>
        <dbReference type="ChEBI" id="CHEBI:37565"/>
    </ligand>
</feature>
<feature type="binding site" evidence="13 38">
    <location>
        <position position="156"/>
    </location>
    <ligand>
        <name>GTP</name>
        <dbReference type="ChEBI" id="CHEBI:37565"/>
    </ligand>
</feature>
<feature type="binding site" evidence="8 11 13 36 37 38">
    <location>
        <position position="157"/>
    </location>
    <ligand>
        <name>GTP</name>
        <dbReference type="ChEBI" id="CHEBI:37565"/>
    </ligand>
</feature>
<feature type="binding site" evidence="8 11 13 36 37 38">
    <location>
        <position position="158"/>
    </location>
    <ligand>
        <name>GTP</name>
        <dbReference type="ChEBI" id="CHEBI:37565"/>
    </ligand>
</feature>
<feature type="modified residue" description="N-acetylserine" evidence="23 39 40 41 42 43">
    <location>
        <position position="2"/>
    </location>
</feature>
<feature type="modified residue" description="O-AMP-tyrosine; by Legionella DrrA" evidence="17">
    <location>
        <position position="82"/>
    </location>
</feature>
<feature type="modified residue" description="Phosphoserine" evidence="2">
    <location>
        <position position="184"/>
    </location>
</feature>
<feature type="modified residue" description="Cysteine methyl ester" evidence="1">
    <location>
        <position position="208"/>
    </location>
</feature>
<feature type="lipid moiety-binding region" description="S-geranylgeranyl cysteine" evidence="1">
    <location>
        <position position="206"/>
    </location>
</feature>
<feature type="lipid moiety-binding region" description="S-geranylgeranyl cysteine" evidence="1">
    <location>
        <position position="208"/>
    </location>
</feature>
<feature type="splice variant" id="VSP_046967" description="In isoform 4." evidence="26">
    <location>
        <begin position="1"/>
        <end position="33"/>
    </location>
</feature>
<feature type="splice variant" id="VSP_045302" description="In isoform 3." evidence="29">
    <location>
        <begin position="62"/>
        <end position="165"/>
    </location>
</feature>
<feature type="splice variant" id="VSP_005527" description="In isoform 2 and isoform 4." evidence="24 25 26 27 28 30">
    <original>VRLQLWDTAGQERFRSLIPSYIRDSTV</original>
    <variation>IRLQLWDTAGQERFRSLIPSYIRDSAA</variation>
    <location>
        <begin position="62"/>
        <end position="88"/>
    </location>
</feature>
<feature type="mutagenesis site" description="Loss of APBA1-binding. No loss of RIC1- and RGP1-binding." evidence="18 20">
    <original>T</original>
    <variation>N</variation>
    <location>
        <position position="27"/>
    </location>
</feature>
<feature type="mutagenesis site" description="Loss of RAB6IP1-binding." evidence="13">
    <original>I</original>
    <variation>E</variation>
    <location>
        <position position="46"/>
    </location>
</feature>
<feature type="mutagenesis site" description="Loss of GTPase activity. Interacts with APBA1." evidence="8 11 13 20">
    <original>Q</original>
    <variation>L</variation>
    <location>
        <position position="72"/>
    </location>
</feature>
<feature type="sequence conflict" description="In Ref. 7; BAH13508." evidence="31" ref="7">
    <original>I</original>
    <variation>T</variation>
    <location>
        <position position="189"/>
    </location>
</feature>
<feature type="strand" evidence="44">
    <location>
        <begin position="15"/>
        <end position="21"/>
    </location>
</feature>
<feature type="helix" evidence="44">
    <location>
        <begin position="26"/>
        <end position="35"/>
    </location>
</feature>
<feature type="strand" evidence="44">
    <location>
        <begin position="47"/>
        <end position="56"/>
    </location>
</feature>
<feature type="strand" evidence="44">
    <location>
        <begin position="61"/>
        <end position="69"/>
    </location>
</feature>
<feature type="helix" evidence="44">
    <location>
        <begin position="73"/>
        <end position="78"/>
    </location>
</feature>
<feature type="helix" evidence="44">
    <location>
        <begin position="79"/>
        <end position="83"/>
    </location>
</feature>
<feature type="strand" evidence="44">
    <location>
        <begin position="87"/>
        <end position="94"/>
    </location>
</feature>
<feature type="helix" evidence="44">
    <location>
        <begin position="98"/>
        <end position="102"/>
    </location>
</feature>
<feature type="helix" evidence="44">
    <location>
        <begin position="104"/>
        <end position="115"/>
    </location>
</feature>
<feature type="strand" evidence="44">
    <location>
        <begin position="118"/>
        <end position="126"/>
    </location>
</feature>
<feature type="helix" evidence="45">
    <location>
        <begin position="128"/>
        <end position="130"/>
    </location>
</feature>
<feature type="helix" evidence="44">
    <location>
        <begin position="131"/>
        <end position="133"/>
    </location>
</feature>
<feature type="helix" evidence="44">
    <location>
        <begin position="138"/>
        <end position="147"/>
    </location>
</feature>
<feature type="strand" evidence="44">
    <location>
        <begin position="151"/>
        <end position="154"/>
    </location>
</feature>
<feature type="turn" evidence="44">
    <location>
        <begin position="157"/>
        <end position="159"/>
    </location>
</feature>
<feature type="helix" evidence="44">
    <location>
        <begin position="163"/>
        <end position="173"/>
    </location>
</feature>
<organism>
    <name type="scientific">Homo sapiens</name>
    <name type="common">Human</name>
    <dbReference type="NCBI Taxonomy" id="9606"/>
    <lineage>
        <taxon>Eukaryota</taxon>
        <taxon>Metazoa</taxon>
        <taxon>Chordata</taxon>
        <taxon>Craniata</taxon>
        <taxon>Vertebrata</taxon>
        <taxon>Euteleostomi</taxon>
        <taxon>Mammalia</taxon>
        <taxon>Eutheria</taxon>
        <taxon>Euarchontoglires</taxon>
        <taxon>Primates</taxon>
        <taxon>Haplorrhini</taxon>
        <taxon>Catarrhini</taxon>
        <taxon>Hominidae</taxon>
        <taxon>Homo</taxon>
    </lineage>
</organism>
<reference key="1">
    <citation type="journal article" date="1989" name="J. Biol. Chem.">
        <title>The human Rab genes encode a family of GTP-binding proteins related to yeast YPT1 and SEC4 products involved in secretion.</title>
        <authorList>
            <person name="Zahraoui A."/>
            <person name="Touchot N."/>
            <person name="Chardin P."/>
            <person name="Tavitian A."/>
        </authorList>
    </citation>
    <scope>NUCLEOTIDE SEQUENCE [MRNA] (ISOFORM 1)</scope>
</reference>
<reference key="2">
    <citation type="journal article" date="2000" name="J. Cell. Biochem.">
        <title>Impairment of bile salt-dependent lipase secretion in human pancreatic tumoral SOJ-6 cells.</title>
        <authorList>
            <person name="Caillol N."/>
            <person name="Pasqualini E."/>
            <person name="Lloubes R."/>
            <person name="Lombardo D."/>
        </authorList>
    </citation>
    <scope>NUCLEOTIDE SEQUENCE [MRNA] (ISOFORM 1)</scope>
    <source>
        <tissue>Pancreatic tumor</tissue>
    </source>
</reference>
<reference key="3">
    <citation type="journal article" date="2000" name="Gene">
        <title>Rab6c, a new member of the Rab gene family, is involved in drug resistance in MCF7/AdrR cells.</title>
        <authorList>
            <person name="Shan J."/>
            <person name="Mason J.M."/>
            <person name="Yuan L."/>
            <person name="Barcia M."/>
            <person name="Porti D."/>
            <person name="Calabro A."/>
            <person name="Budman D."/>
            <person name="Vinciguerra V."/>
            <person name="Xu H.-P."/>
        </authorList>
    </citation>
    <scope>NUCLEOTIDE SEQUENCE [MRNA] (ISOFORM 2)</scope>
</reference>
<reference key="4">
    <citation type="journal article" date="2000" name="Mol. Biol. Cell">
        <title>Alternative splicing of the human Rab6A gene generates two close but functionally different isoforms.</title>
        <authorList>
            <person name="Echard A."/>
            <person name="Opdam F.J.M."/>
            <person name="de Leeuw H.J.P.C."/>
            <person name="Jollivet F."/>
            <person name="Savelkoul P."/>
            <person name="Hendriks W."/>
            <person name="Voorberg J."/>
            <person name="Goud B."/>
            <person name="Fransen J.A.M."/>
        </authorList>
    </citation>
    <scope>NUCLEOTIDE SEQUENCE [MRNA] (ISOFORM 2)</scope>
    <scope>TISSUE SPECIFICITY</scope>
    <scope>CHARACTERIZATION</scope>
    <scope>SUBCELLULAR LOCATION (ISOFORMS 1 AND 2)</scope>
</reference>
<reference key="5">
    <citation type="submission" date="1999-02" db="EMBL/GenBank/DDBJ databases">
        <title>A second form of RAB6 in humans.</title>
        <authorList>
            <person name="Barr F.A."/>
        </authorList>
    </citation>
    <scope>NUCLEOTIDE SEQUENCE [MRNA] (ISOFORM 2)</scope>
</reference>
<reference key="6">
    <citation type="submission" date="2006-03" db="EMBL/GenBank/DDBJ databases">
        <authorList>
            <person name="Delisle B.P."/>
            <person name="Foell J.D."/>
            <person name="Slind J.K."/>
            <person name="Kilby J.A."/>
            <person name="Balijepalli R.C."/>
            <person name="Kamp T.J."/>
            <person name="January C.T."/>
        </authorList>
    </citation>
    <scope>NUCLEOTIDE SEQUENCE [MRNA] (ISOFORM 3)</scope>
    <source>
        <tissue>Heart</tissue>
    </source>
</reference>
<reference key="7">
    <citation type="journal article" date="2004" name="Nat. Genet.">
        <title>Complete sequencing and characterization of 21,243 full-length human cDNAs.</title>
        <authorList>
            <person name="Ota T."/>
            <person name="Suzuki Y."/>
            <person name="Nishikawa T."/>
            <person name="Otsuki T."/>
            <person name="Sugiyama T."/>
            <person name="Irie R."/>
            <person name="Wakamatsu A."/>
            <person name="Hayashi K."/>
            <person name="Sato H."/>
            <person name="Nagai K."/>
            <person name="Kimura K."/>
            <person name="Makita H."/>
            <person name="Sekine M."/>
            <person name="Obayashi M."/>
            <person name="Nishi T."/>
            <person name="Shibahara T."/>
            <person name="Tanaka T."/>
            <person name="Ishii S."/>
            <person name="Yamamoto J."/>
            <person name="Saito K."/>
            <person name="Kawai Y."/>
            <person name="Isono Y."/>
            <person name="Nakamura Y."/>
            <person name="Nagahari K."/>
            <person name="Murakami K."/>
            <person name="Yasuda T."/>
            <person name="Iwayanagi T."/>
            <person name="Wagatsuma M."/>
            <person name="Shiratori A."/>
            <person name="Sudo H."/>
            <person name="Hosoiri T."/>
            <person name="Kaku Y."/>
            <person name="Kodaira H."/>
            <person name="Kondo H."/>
            <person name="Sugawara M."/>
            <person name="Takahashi M."/>
            <person name="Kanda K."/>
            <person name="Yokoi T."/>
            <person name="Furuya T."/>
            <person name="Kikkawa E."/>
            <person name="Omura Y."/>
            <person name="Abe K."/>
            <person name="Kamihara K."/>
            <person name="Katsuta N."/>
            <person name="Sato K."/>
            <person name="Tanikawa M."/>
            <person name="Yamazaki M."/>
            <person name="Ninomiya K."/>
            <person name="Ishibashi T."/>
            <person name="Yamashita H."/>
            <person name="Murakawa K."/>
            <person name="Fujimori K."/>
            <person name="Tanai H."/>
            <person name="Kimata M."/>
            <person name="Watanabe M."/>
            <person name="Hiraoka S."/>
            <person name="Chiba Y."/>
            <person name="Ishida S."/>
            <person name="Ono Y."/>
            <person name="Takiguchi S."/>
            <person name="Watanabe S."/>
            <person name="Yosida M."/>
            <person name="Hotuta T."/>
            <person name="Kusano J."/>
            <person name="Kanehori K."/>
            <person name="Takahashi-Fujii A."/>
            <person name="Hara H."/>
            <person name="Tanase T.-O."/>
            <person name="Nomura Y."/>
            <person name="Togiya S."/>
            <person name="Komai F."/>
            <person name="Hara R."/>
            <person name="Takeuchi K."/>
            <person name="Arita M."/>
            <person name="Imose N."/>
            <person name="Musashino K."/>
            <person name="Yuuki H."/>
            <person name="Oshima A."/>
            <person name="Sasaki N."/>
            <person name="Aotsuka S."/>
            <person name="Yoshikawa Y."/>
            <person name="Matsunawa H."/>
            <person name="Ichihara T."/>
            <person name="Shiohata N."/>
            <person name="Sano S."/>
            <person name="Moriya S."/>
            <person name="Momiyama H."/>
            <person name="Satoh N."/>
            <person name="Takami S."/>
            <person name="Terashima Y."/>
            <person name="Suzuki O."/>
            <person name="Nakagawa S."/>
            <person name="Senoh A."/>
            <person name="Mizoguchi H."/>
            <person name="Goto Y."/>
            <person name="Shimizu F."/>
            <person name="Wakebe H."/>
            <person name="Hishigaki H."/>
            <person name="Watanabe T."/>
            <person name="Sugiyama A."/>
            <person name="Takemoto M."/>
            <person name="Kawakami B."/>
            <person name="Yamazaki M."/>
            <person name="Watanabe K."/>
            <person name="Kumagai A."/>
            <person name="Itakura S."/>
            <person name="Fukuzumi Y."/>
            <person name="Fujimori Y."/>
            <person name="Komiyama M."/>
            <person name="Tashiro H."/>
            <person name="Tanigami A."/>
            <person name="Fujiwara T."/>
            <person name="Ono T."/>
            <person name="Yamada K."/>
            <person name="Fujii Y."/>
            <person name="Ozaki K."/>
            <person name="Hirao M."/>
            <person name="Ohmori Y."/>
            <person name="Kawabata A."/>
            <person name="Hikiji T."/>
            <person name="Kobatake N."/>
            <person name="Inagaki H."/>
            <person name="Ikema Y."/>
            <person name="Okamoto S."/>
            <person name="Okitani R."/>
            <person name="Kawakami T."/>
            <person name="Noguchi S."/>
            <person name="Itoh T."/>
            <person name="Shigeta K."/>
            <person name="Senba T."/>
            <person name="Matsumura K."/>
            <person name="Nakajima Y."/>
            <person name="Mizuno T."/>
            <person name="Morinaga M."/>
            <person name="Sasaki M."/>
            <person name="Togashi T."/>
            <person name="Oyama M."/>
            <person name="Hata H."/>
            <person name="Watanabe M."/>
            <person name="Komatsu T."/>
            <person name="Mizushima-Sugano J."/>
            <person name="Satoh T."/>
            <person name="Shirai Y."/>
            <person name="Takahashi Y."/>
            <person name="Nakagawa K."/>
            <person name="Okumura K."/>
            <person name="Nagase T."/>
            <person name="Nomura N."/>
            <person name="Kikuchi H."/>
            <person name="Masuho Y."/>
            <person name="Yamashita R."/>
            <person name="Nakai K."/>
            <person name="Yada T."/>
            <person name="Nakamura Y."/>
            <person name="Ohara O."/>
            <person name="Isogai T."/>
            <person name="Sugano S."/>
        </authorList>
    </citation>
    <scope>NUCLEOTIDE SEQUENCE [LARGE SCALE MRNA] (ISOFORMS 1; 2 AND 4)</scope>
    <source>
        <tissue>Brain</tissue>
        <tissue>Spleen</tissue>
        <tissue>Thalamus</tissue>
    </source>
</reference>
<reference key="8">
    <citation type="submission" date="2002-04" db="EMBL/GenBank/DDBJ databases">
        <title>cDNA clones of human proteins involved in signal transduction sequenced by the Guthrie cDNA resource center (www.cdna.org).</title>
        <authorList>
            <person name="Puhl H.L. III"/>
            <person name="Ikeda S.R."/>
            <person name="Aronstam R.S."/>
        </authorList>
    </citation>
    <scope>NUCLEOTIDE SEQUENCE [LARGE SCALE MRNA] (ISOFORMS 1 AND 2)</scope>
    <source>
        <tissue>Brain</tissue>
    </source>
</reference>
<reference key="9">
    <citation type="submission" date="2004-10" db="EMBL/GenBank/DDBJ databases">
        <title>Cloning of human full-length CDSs in BD Creator(TM) system donor vector.</title>
        <authorList>
            <person name="Kalnine N."/>
            <person name="Chen X."/>
            <person name="Rolfs A."/>
            <person name="Halleck A."/>
            <person name="Hines L."/>
            <person name="Eisenstein S."/>
            <person name="Koundinya M."/>
            <person name="Raphael J."/>
            <person name="Moreira D."/>
            <person name="Kelley T."/>
            <person name="LaBaer J."/>
            <person name="Lin Y."/>
            <person name="Phelan M."/>
            <person name="Farmer A."/>
        </authorList>
    </citation>
    <scope>NUCLEOTIDE SEQUENCE [LARGE SCALE MRNA] (ISOFORM 1)</scope>
</reference>
<reference key="10">
    <citation type="journal article" date="2006" name="Nature">
        <title>Human chromosome 11 DNA sequence and analysis including novel gene identification.</title>
        <authorList>
            <person name="Taylor T.D."/>
            <person name="Noguchi H."/>
            <person name="Totoki Y."/>
            <person name="Toyoda A."/>
            <person name="Kuroki Y."/>
            <person name="Dewar K."/>
            <person name="Lloyd C."/>
            <person name="Itoh T."/>
            <person name="Takeda T."/>
            <person name="Kim D.-W."/>
            <person name="She X."/>
            <person name="Barlow K.F."/>
            <person name="Bloom T."/>
            <person name="Bruford E."/>
            <person name="Chang J.L."/>
            <person name="Cuomo C.A."/>
            <person name="Eichler E."/>
            <person name="FitzGerald M.G."/>
            <person name="Jaffe D.B."/>
            <person name="LaButti K."/>
            <person name="Nicol R."/>
            <person name="Park H.-S."/>
            <person name="Seaman C."/>
            <person name="Sougnez C."/>
            <person name="Yang X."/>
            <person name="Zimmer A.R."/>
            <person name="Zody M.C."/>
            <person name="Birren B.W."/>
            <person name="Nusbaum C."/>
            <person name="Fujiyama A."/>
            <person name="Hattori M."/>
            <person name="Rogers J."/>
            <person name="Lander E.S."/>
            <person name="Sakaki Y."/>
        </authorList>
    </citation>
    <scope>NUCLEOTIDE SEQUENCE [LARGE SCALE GENOMIC DNA]</scope>
</reference>
<reference key="11">
    <citation type="journal article" date="2004" name="Genome Res.">
        <title>The status, quality, and expansion of the NIH full-length cDNA project: the Mammalian Gene Collection (MGC).</title>
        <authorList>
            <consortium name="The MGC Project Team"/>
        </authorList>
    </citation>
    <scope>NUCLEOTIDE SEQUENCE [LARGE SCALE MRNA] (ISOFORMS 1 AND 2)</scope>
    <source>
        <tissue>Kidney</tissue>
        <tissue>Placenta</tissue>
        <tissue>Testis</tissue>
    </source>
</reference>
<reference key="12">
    <citation type="submission" date="2005-11" db="UniProtKB">
        <authorList>
            <person name="Bienvenut W.V."/>
            <person name="Claeys D."/>
        </authorList>
    </citation>
    <scope>PROTEIN SEQUENCE OF 2-13; 64-74; 77-84 AND 116-143</scope>
    <scope>CLEAVAGE OF INITIATOR METHIONINE</scope>
    <scope>ACETYLATION AT SER-2</scope>
    <scope>IDENTIFICATION BY MASS SPECTROMETRY</scope>
    <source>
        <tissue>Platelet</tissue>
    </source>
</reference>
<reference key="13">
    <citation type="journal article" date="1999" name="EMBO J.">
        <title>Characterization of GAPCenA, a GTPase activating protein for Rab6, part of which associates with the centrosome.</title>
        <authorList>
            <person name="Cuif M.-H."/>
            <person name="Possmayer F."/>
            <person name="Zander H."/>
            <person name="Bordes N."/>
            <person name="Jollivet F."/>
            <person name="Couedel-Courteille A."/>
            <person name="Janoueix-Lerosey I."/>
            <person name="Langsley G."/>
            <person name="Bornens M."/>
            <person name="Goud B."/>
        </authorList>
    </citation>
    <scope>INTERACTION WITH RABGAP1</scope>
</reference>
<reference key="14">
    <citation type="journal article" date="2002" name="Nat. Cell Biol.">
        <title>Bicaudal-D regulates COPI-independent Golgi-ER transport by recruiting the dynein-dynactin motor complex.</title>
        <authorList>
            <person name="Matanis T."/>
            <person name="Akhmanova A."/>
            <person name="Wulf P."/>
            <person name="Del Nery E."/>
            <person name="Weide T."/>
            <person name="Stepanova T."/>
            <person name="Galjart N."/>
            <person name="Grosveld F."/>
            <person name="Goud B."/>
            <person name="De Zeeuw C.I."/>
            <person name="Barnekow A."/>
            <person name="Hoogenraad C.C."/>
        </authorList>
    </citation>
    <scope>INTERACTION WITH BICD1 AND BICD2 (ISOFORM 1 AND 2)</scope>
</reference>
<reference key="15">
    <citation type="journal article" date="2005" name="Exp. Cell Res.">
        <title>Characterization of the human GARP (Golgi associated retrograde protein) complex.</title>
        <authorList>
            <person name="Liewen H."/>
            <person name="Meinhold-Heerlein I."/>
            <person name="Oliveira V."/>
            <person name="Schwarzenbacher R."/>
            <person name="Luo G."/>
            <person name="Wadle A."/>
            <person name="Jung M."/>
            <person name="Pfreundschuh M."/>
            <person name="Stenner-Liewen F."/>
        </authorList>
    </citation>
    <scope>INTERACTION WITH VSP52</scope>
</reference>
<reference key="16">
    <citation type="journal article" date="2007" name="Exp. Cell Res.">
        <title>Functional involvement of TMF/ARA160 in Rab6-dependent retrograde membrane traffic.</title>
        <authorList>
            <person name="Yamane J."/>
            <person name="Kubo A."/>
            <person name="Nakayama K."/>
            <person name="Yuba-Kubo A."/>
            <person name="Katsuno T."/>
            <person name="Tsukita S."/>
            <person name="Tsukita S."/>
        </authorList>
    </citation>
    <scope>INTERACTION WITH TMF1</scope>
</reference>
<reference key="17">
    <citation type="journal article" date="2008" name="Cell Motil. Cytoskeleton">
        <title>Rab6 family proteins interact with the dynein light chain protein DYNLRB1.</title>
        <authorList>
            <person name="Wanschers B.F.J."/>
            <person name="van de Vorstenbosch R."/>
            <person name="Wijers M."/>
            <person name="Wieringa B."/>
            <person name="King S.M."/>
            <person name="Fransen J."/>
        </authorList>
    </citation>
    <scope>INTERACTION WITH DYNLRB1 (ISOFORM 1 AND 2)</scope>
</reference>
<reference key="18">
    <citation type="journal article" date="2008" name="Nat. Genet.">
        <title>Gerodermia osteodysplastica is caused by mutations in SCYL1BP1, a Rab-6 interacting golgin.</title>
        <authorList>
            <person name="Hennies H.C."/>
            <person name="Kornak U."/>
            <person name="Zhang H."/>
            <person name="Egerer J."/>
            <person name="Zhang X."/>
            <person name="Seifert W."/>
            <person name="Kuhnisch J."/>
            <person name="Budde B."/>
            <person name="Naetebus M."/>
            <person name="Brancati F."/>
            <person name="Wilcox W.R."/>
            <person name="Mueller D."/>
            <person name="Kaplan P.B."/>
            <person name="Rajab A."/>
            <person name="Zampino G."/>
            <person name="Fodale V."/>
            <person name="Dallapiccola B."/>
            <person name="Newman W."/>
            <person name="Metcalfe K."/>
            <person name="Clayton-Smith J."/>
            <person name="Tassabehji M."/>
            <person name="Steinmann B."/>
            <person name="Barr F.A."/>
            <person name="Nuernberg P."/>
            <person name="Wieacker P."/>
            <person name="Mundlos S."/>
        </authorList>
    </citation>
    <scope>INTERACTION WITH SCYL1BP1</scope>
</reference>
<reference key="19">
    <citation type="journal article" date="2009" name="Anal. Chem.">
        <title>Lys-N and trypsin cover complementary parts of the phosphoproteome in a refined SCX-based approach.</title>
        <authorList>
            <person name="Gauci S."/>
            <person name="Helbig A.O."/>
            <person name="Slijper M."/>
            <person name="Krijgsveld J."/>
            <person name="Heck A.J."/>
            <person name="Mohammed S."/>
        </authorList>
    </citation>
    <scope>ACETYLATION [LARGE SCALE ANALYSIS] AT SER-2</scope>
    <scope>CLEAVAGE OF INITIATOR METHIONINE [LARGE SCALE ANALYSIS]</scope>
    <scope>IDENTIFICATION BY MASS SPECTROMETRY [LARGE SCALE ANALYSIS]</scope>
</reference>
<reference key="20">
    <citation type="journal article" date="2010" name="Dev. Cell">
        <title>Pitchfork regulates primary cilia disassembly and left-right asymmetry.</title>
        <authorList>
            <person name="Kinzel D."/>
            <person name="Boldt K."/>
            <person name="Davis E.E."/>
            <person name="Burtscher I."/>
            <person name="Trumbach D."/>
            <person name="Diplas B."/>
            <person name="Attie-Bitach T."/>
            <person name="Wurst W."/>
            <person name="Katsanis N."/>
            <person name="Ueffing M."/>
            <person name="Lickert H."/>
        </authorList>
    </citation>
    <scope>INTERACTION WITH CIMAP3</scope>
</reference>
<reference key="21">
    <citation type="journal article" date="2010" name="PLoS Biol.">
        <title>Bicaudal D2, dynein, and kinesin-1 associate with nuclear pore complexes and regulate centrosome and nuclear positioning during mitotic entry.</title>
        <authorList>
            <person name="Splinter D."/>
            <person name="Tanenbaum M.E."/>
            <person name="Lindqvist A."/>
            <person name="Jaarsma D."/>
            <person name="Flotho A."/>
            <person name="Yu K.L."/>
            <person name="Grigoriev I."/>
            <person name="Engelsma D."/>
            <person name="Haasdijk E.D."/>
            <person name="Keijzer N."/>
            <person name="Demmers J."/>
            <person name="Fornerod M."/>
            <person name="Melchior F."/>
            <person name="Hoogenraad C.C."/>
            <person name="Medema R.H."/>
            <person name="Akhmanova A."/>
        </authorList>
    </citation>
    <scope>INTERACTION WITH BICD2</scope>
</reference>
<reference key="22">
    <citation type="journal article" date="2010" name="Sci. Signal.">
        <title>Quantitative phosphoproteomics reveals widespread full phosphorylation site occupancy during mitosis.</title>
        <authorList>
            <person name="Olsen J.V."/>
            <person name="Vermeulen M."/>
            <person name="Santamaria A."/>
            <person name="Kumar C."/>
            <person name="Miller M.L."/>
            <person name="Jensen L.J."/>
            <person name="Gnad F."/>
            <person name="Cox J."/>
            <person name="Jensen T.S."/>
            <person name="Nigg E.A."/>
            <person name="Brunak S."/>
            <person name="Mann M."/>
        </authorList>
    </citation>
    <scope>ACETYLATION [LARGE SCALE ANALYSIS] AT SER-2</scope>
    <scope>CLEAVAGE OF INITIATOR METHIONINE [LARGE SCALE ANALYSIS]</scope>
    <scope>IDENTIFICATION BY MASS SPECTROMETRY [LARGE SCALE ANALYSIS]</scope>
    <source>
        <tissue>Cervix carcinoma</tissue>
    </source>
</reference>
<reference key="23">
    <citation type="journal article" date="2011" name="BMC Syst. Biol.">
        <title>Initial characterization of the human central proteome.</title>
        <authorList>
            <person name="Burkard T.R."/>
            <person name="Planyavsky M."/>
            <person name="Kaupe I."/>
            <person name="Breitwieser F.P."/>
            <person name="Buerckstuemmer T."/>
            <person name="Bennett K.L."/>
            <person name="Superti-Furga G."/>
            <person name="Colinge J."/>
        </authorList>
    </citation>
    <scope>IDENTIFICATION BY MASS SPECTROMETRY [LARGE SCALE ANALYSIS]</scope>
</reference>
<reference key="24">
    <citation type="journal article" date="2011" name="J. Virol.">
        <title>A role for the small GTPase Rab6 in assembly of human cytomegalovirus.</title>
        <authorList>
            <person name="Indran S.V."/>
            <person name="Britt W.J."/>
        </authorList>
    </citation>
    <scope>INTERACTION WITH HUMAN CYTOMEGALOVIRUS PROTEIN UL32 (MICROBIAL INFECTION)</scope>
</reference>
<reference key="25">
    <citation type="journal article" date="2011" name="Nature">
        <title>Modulation of Rab GTPase function by a protein phosphocholine transferase.</title>
        <authorList>
            <person name="Mukherjee S."/>
            <person name="Liu X."/>
            <person name="Arasaki K."/>
            <person name="McDonough J."/>
            <person name="Galan J.E."/>
            <person name="Roy C.R."/>
        </authorList>
    </citation>
    <scope>AMPYLATION AT TYR-82</scope>
</reference>
<reference key="26">
    <citation type="journal article" date="2012" name="J. Biol. Chem.">
        <title>Ric1-Rgp1 complex is a guanine nucleotide exchange factor for the late Golgi Rab6A GTPase and an effector of the medial Golgi Rab33B GTPase.</title>
        <authorList>
            <person name="Pusapati G.V."/>
            <person name="Luchetti G."/>
            <person name="Pfeffer S.R."/>
        </authorList>
    </citation>
    <scope>INTERACTION WITH RIC1 AND RGP1</scope>
    <scope>SUBCELLULAR LOCATION</scope>
    <scope>MUTAGENESIS OF THR-27</scope>
</reference>
<reference key="27">
    <citation type="journal article" date="2012" name="Mol. Cell. Proteomics">
        <title>Comparative large-scale characterisation of plant vs. mammal proteins reveals similar and idiosyncratic N-alpha acetylation features.</title>
        <authorList>
            <person name="Bienvenut W.V."/>
            <person name="Sumpton D."/>
            <person name="Martinez A."/>
            <person name="Lilla S."/>
            <person name="Espagne C."/>
            <person name="Meinnel T."/>
            <person name="Giglione C."/>
        </authorList>
    </citation>
    <scope>ACETYLATION [LARGE SCALE ANALYSIS] AT SER-2</scope>
    <scope>CLEAVAGE OF INITIATOR METHIONINE [LARGE SCALE ANALYSIS]</scope>
    <scope>IDENTIFICATION BY MASS SPECTROMETRY [LARGE SCALE ANALYSIS]</scope>
</reference>
<reference key="28">
    <citation type="journal article" date="2012" name="Proc. Natl. Acad. Sci. U.S.A.">
        <title>N-terminal acetylome analyses and functional insights of the N-terminal acetyltransferase NatB.</title>
        <authorList>
            <person name="Van Damme P."/>
            <person name="Lasa M."/>
            <person name="Polevoda B."/>
            <person name="Gazquez C."/>
            <person name="Elosegui-Artola A."/>
            <person name="Kim D.S."/>
            <person name="De Juan-Pardo E."/>
            <person name="Demeyer K."/>
            <person name="Hole K."/>
            <person name="Larrea E."/>
            <person name="Timmerman E."/>
            <person name="Prieto J."/>
            <person name="Arnesen T."/>
            <person name="Sherman F."/>
            <person name="Gevaert K."/>
            <person name="Aldabe R."/>
        </authorList>
    </citation>
    <scope>ACETYLATION [LARGE SCALE ANALYSIS] AT SER-2</scope>
    <scope>CLEAVAGE OF INITIATOR METHIONINE [LARGE SCALE ANALYSIS]</scope>
    <scope>IDENTIFICATION BY MASS SPECTROMETRY [LARGE SCALE ANALYSIS]</scope>
</reference>
<reference key="29">
    <citation type="journal article" date="2013" name="Am. J. Hum. Genet.">
        <title>Molecular defects in the motor adaptor BICD2 cause proximal spinal muscular atrophy with autosomal-dominant inheritance.</title>
        <authorList>
            <person name="Peeters K."/>
            <person name="Litvinenko I."/>
            <person name="Asselbergh B."/>
            <person name="Almeida-Souza L."/>
            <person name="Chamova T."/>
            <person name="Geuens T."/>
            <person name="Ydens E."/>
            <person name="Zimon M."/>
            <person name="Irobi J."/>
            <person name="De Vriendt E."/>
            <person name="De Winter V."/>
            <person name="Ooms T."/>
            <person name="Timmerman V."/>
            <person name="Tournev I."/>
            <person name="Jordanova A."/>
        </authorList>
    </citation>
    <scope>INTERACTION WITH BICD2</scope>
</reference>
<reference key="30">
    <citation type="journal article" date="2013" name="J. Proteome Res.">
        <title>Toward a comprehensive characterization of a human cancer cell phosphoproteome.</title>
        <authorList>
            <person name="Zhou H."/>
            <person name="Di Palma S."/>
            <person name="Preisinger C."/>
            <person name="Peng M."/>
            <person name="Polat A.N."/>
            <person name="Heck A.J."/>
            <person name="Mohammed S."/>
        </authorList>
    </citation>
    <scope>IDENTIFICATION BY MASS SPECTROMETRY [LARGE SCALE ANALYSIS]</scope>
    <source>
        <tissue>Cervix carcinoma</tissue>
        <tissue>Erythroleukemia</tissue>
    </source>
</reference>
<reference key="31">
    <citation type="journal article" date="2013" name="PLoS ONE">
        <title>A new Mint1 isoform, but not the conventional Mint1, interacts with the small GTPase Rab6.</title>
        <authorList>
            <person name="Thyrock A."/>
            <person name="Ossendorf E."/>
            <person name="Stehling M."/>
            <person name="Kail M."/>
            <person name="Kurtz T."/>
            <person name="Pohlentz G."/>
            <person name="Waschbusch D."/>
            <person name="Eggert S."/>
            <person name="Formstecher E."/>
            <person name="Muthing J."/>
            <person name="Dreisewerd K."/>
            <person name="Kins S."/>
            <person name="Goud B."/>
            <person name="Barnekow A."/>
        </authorList>
    </citation>
    <scope>INTERACTION WITH APBA1</scope>
    <scope>MUTAGENESIS OF THR-27 AND GLN-72</scope>
</reference>
<reference key="32">
    <citation type="journal article" date="2014" name="J. Proteomics">
        <title>An enzyme assisted RP-RPLC approach for in-depth analysis of human liver phosphoproteome.</title>
        <authorList>
            <person name="Bian Y."/>
            <person name="Song C."/>
            <person name="Cheng K."/>
            <person name="Dong M."/>
            <person name="Wang F."/>
            <person name="Huang J."/>
            <person name="Sun D."/>
            <person name="Wang L."/>
            <person name="Ye M."/>
            <person name="Zou H."/>
        </authorList>
    </citation>
    <scope>IDENTIFICATION BY MASS SPECTROMETRY [LARGE SCALE ANALYSIS]</scope>
    <source>
        <tissue>Liver</tissue>
    </source>
</reference>
<reference key="33">
    <citation type="journal article" date="2015" name="J. Biol. Chem.">
        <title>Cohen syndrome-associated protein COH1 physically and functionally interacts with the small GTPase RAB6 at the Golgi complex and directs neurite outgrowth.</title>
        <authorList>
            <person name="Seifert W."/>
            <person name="Kuehnisch J."/>
            <person name="Maritzen T."/>
            <person name="Lommatzsch S."/>
            <person name="Hennies H.C."/>
            <person name="Bachmann S."/>
            <person name="Horn D."/>
            <person name="Haucke V."/>
        </authorList>
    </citation>
    <scope>FUNCTION</scope>
    <scope>INTERACTION WITH VPS13B (ISOFORM 1 AND 2)</scope>
</reference>
<reference key="34">
    <citation type="journal article" date="2015" name="Biochim. Biophys. Acta">
        <title>Reconstitution of the targeting of Rab6A to the Golgi apparatus in semi-intact HeLa cells: A role of BICD2 in stabilizing Rab6A on Golgi membranes and a concerted role of Rab6A/BICD2 interactions in Golgi-to-ER retrograde transport.</title>
        <authorList>
            <person name="Matsuto M."/>
            <person name="Kano F."/>
            <person name="Murata M."/>
        </authorList>
    </citation>
    <scope>FUNCTION</scope>
    <scope>INTERACTION WITH BICD2 (ISOFORM 1)</scope>
    <scope>SUBCELLULAR LOCATION</scope>
    <scope>ISOPRENYLATION</scope>
</reference>
<reference key="35">
    <citation type="journal article" date="2015" name="Proteomics">
        <title>N-terminome analysis of the human mitochondrial proteome.</title>
        <authorList>
            <person name="Vaca Jacome A.S."/>
            <person name="Rabilloud T."/>
            <person name="Schaeffer-Reiss C."/>
            <person name="Rompais M."/>
            <person name="Ayoub D."/>
            <person name="Lane L."/>
            <person name="Bairoch A."/>
            <person name="Van Dorsselaer A."/>
            <person name="Carapito C."/>
        </authorList>
    </citation>
    <scope>ACETYLATION [LARGE SCALE ANALYSIS] AT SER-2</scope>
    <scope>CLEAVAGE OF INITIATOR METHIONINE [LARGE SCALE ANALYSIS]</scope>
    <scope>IDENTIFICATION BY MASS SPECTROMETRY [LARGE SCALE ANALYSIS]</scope>
</reference>
<reference evidence="36" key="36">
    <citation type="journal article" date="2005" name="J. Struct. Biol.">
        <title>Structure of the extremely slow GTPase Rab6A in the GTP bound form at 1.8A resolution.</title>
        <authorList>
            <person name="Bergbrede T."/>
            <person name="Pylypenko O."/>
            <person name="Rak A."/>
            <person name="Alexandrov K."/>
        </authorList>
    </citation>
    <scope>X-RAY CRYSTALLOGRAPHY (1.82 ANGSTROMS) OF 13-174 IN COMPLEX WITH GTP AND MG(2+)</scope>
    <scope>MUTAGENESIS OF GLN-72</scope>
    <scope>CATALYTIC ACTIVITY</scope>
</reference>
<reference evidence="35" key="37">
    <citation type="journal article" date="2005" name="Nature">
        <title>Structural basis of family-wide Rab GTPase recognition by rabenosyn-5.</title>
        <authorList>
            <person name="Eathiraj S."/>
            <person name="Pan X."/>
            <person name="Ritacco C."/>
            <person name="Lambright D.G."/>
        </authorList>
    </citation>
    <scope>X-RAY CRYSTALLOGRAPHY (1.78 ANGSTROMS) OF 10-177 IN COMPLEX WITH GTP ANALOG AND MG(2+)</scope>
</reference>
<reference evidence="37" key="38">
    <citation type="journal article" date="2008" name="Cell">
        <title>Rab and Arl GTPase family members cooperate in the localization of the golgin GCC185.</title>
        <authorList>
            <person name="Burguete A.S."/>
            <person name="Fenn T.D."/>
            <person name="Brunger A.T."/>
            <person name="Pfeffer S.R."/>
        </authorList>
    </citation>
    <scope>X-RAY CRYSTALLOGRAPHY (3.0 ANGSTROMS) OF 1-206 IN COMPLEX WITH GTP AND MG(2+)</scope>
    <scope>INTERACTION WITH GCC2</scope>
    <scope>MUTAGENESIS OF GLN-72</scope>
</reference>
<reference evidence="38" key="39">
    <citation type="journal article" date="2009" name="Structure">
        <title>Structural basis for recruitment of Rab6-interacting protein 1 to Golgi via a RUN domain.</title>
        <authorList>
            <person name="Recacha R."/>
            <person name="Boulet A."/>
            <person name="Jollivet F."/>
            <person name="Monier S."/>
            <person name="Houdusse A."/>
            <person name="Goud B."/>
            <person name="Khan A.R."/>
        </authorList>
    </citation>
    <scope>X-RAY CRYSTALLOGRAPHY (3.2 ANGSTROMS) OF 8-195 IN COMPLEX WITH GTP; MG(2+) AND RAB6IP1</scope>
    <scope>MUTAGENESIS OF ILE-46 AND GLN-72</scope>
    <scope>DOMAIN</scope>
</reference>
<proteinExistence type="evidence at protein level"/>
<gene>
    <name evidence="34" type="primary">RAB6A</name>
    <name type="synonym">RAB6</name>
</gene>
<accession>P20340</accession>
<accession>A8K133</accession>
<accession>B7Z772</accession>
<accession>F5H668</accession>
<accession>Q1W5D8</accession>
<accession>Q5U0A8</accession>
<accession>Q9UBE4</accession>